<name>NDHH_ARATH</name>
<geneLocation type="chloroplast"/>
<gene>
    <name evidence="1" type="primary">ndhH</name>
    <name type="ordered locus">AtCg01110</name>
</gene>
<proteinExistence type="evidence at protein level"/>
<organism>
    <name type="scientific">Arabidopsis thaliana</name>
    <name type="common">Mouse-ear cress</name>
    <dbReference type="NCBI Taxonomy" id="3702"/>
    <lineage>
        <taxon>Eukaryota</taxon>
        <taxon>Viridiplantae</taxon>
        <taxon>Streptophyta</taxon>
        <taxon>Embryophyta</taxon>
        <taxon>Tracheophyta</taxon>
        <taxon>Spermatophyta</taxon>
        <taxon>Magnoliopsida</taxon>
        <taxon>eudicotyledons</taxon>
        <taxon>Gunneridae</taxon>
        <taxon>Pentapetalae</taxon>
        <taxon>rosids</taxon>
        <taxon>malvids</taxon>
        <taxon>Brassicales</taxon>
        <taxon>Brassicaceae</taxon>
        <taxon>Camelineae</taxon>
        <taxon>Arabidopsis</taxon>
    </lineage>
</organism>
<evidence type="ECO:0000255" key="1">
    <source>
        <dbReference type="HAMAP-Rule" id="MF_01358"/>
    </source>
</evidence>
<evidence type="ECO:0000269" key="2">
    <source>
    </source>
</evidence>
<evidence type="ECO:0000305" key="3">
    <source>
    </source>
</evidence>
<protein>
    <recommendedName>
        <fullName evidence="1">NAD(P)H-quinone oxidoreductase subunit H, chloroplastic</fullName>
        <ecNumber evidence="1">7.1.1.-</ecNumber>
    </recommendedName>
    <alternativeName>
        <fullName>NAD(P)H dehydrogenase subunit H</fullName>
    </alternativeName>
    <alternativeName>
        <fullName evidence="1">NADH-plastoquinone oxidoreductase 49 kDa subunit</fullName>
    </alternativeName>
    <alternativeName>
        <fullName evidence="1">NADH-plastoquinone oxidoreductase subunit H</fullName>
    </alternativeName>
</protein>
<keyword id="KW-0002">3D-structure</keyword>
<keyword id="KW-0150">Chloroplast</keyword>
<keyword id="KW-0472">Membrane</keyword>
<keyword id="KW-0520">NAD</keyword>
<keyword id="KW-0521">NADP</keyword>
<keyword id="KW-0934">Plastid</keyword>
<keyword id="KW-0618">Plastoquinone</keyword>
<keyword id="KW-0874">Quinone</keyword>
<keyword id="KW-1185">Reference proteome</keyword>
<keyword id="KW-0793">Thylakoid</keyword>
<keyword id="KW-1278">Translocase</keyword>
<keyword id="KW-0813">Transport</keyword>
<reference key="1">
    <citation type="journal article" date="1999" name="DNA Res.">
        <title>Complete structure of the chloroplast genome of Arabidopsis thaliana.</title>
        <authorList>
            <person name="Sato S."/>
            <person name="Nakamura Y."/>
            <person name="Kaneko T."/>
            <person name="Asamizu E."/>
            <person name="Tabata S."/>
        </authorList>
    </citation>
    <scope>NUCLEOTIDE SEQUENCE [LARGE SCALE GENOMIC DNA]</scope>
    <source>
        <strain>cv. Columbia</strain>
    </source>
</reference>
<reference key="2">
    <citation type="journal article" date="2011" name="PLoS Biol.">
        <title>A chaperonin subunit with unique structures is essential for folding of a specific substrate.</title>
        <authorList>
            <person name="Peng L."/>
            <person name="Fukao Y."/>
            <person name="Myouga F."/>
            <person name="Motohashi R."/>
            <person name="Shinozaki K."/>
            <person name="Shikanai T."/>
        </authorList>
    </citation>
    <scope>INTERACTION WITH CNP60B4</scope>
    <scope>FOLDING</scope>
</reference>
<feature type="chain" id="PRO_0000118598" description="NAD(P)H-quinone oxidoreductase subunit H, chloroplastic">
    <location>
        <begin position="1"/>
        <end position="393"/>
    </location>
</feature>
<dbReference type="EC" id="7.1.1.-" evidence="1"/>
<dbReference type="EMBL" id="AP000423">
    <property type="protein sequence ID" value="BAA84443.1"/>
    <property type="molecule type" value="Genomic_DNA"/>
</dbReference>
<dbReference type="RefSeq" id="NP_051115.1">
    <property type="nucleotide sequence ID" value="NC_000932.1"/>
</dbReference>
<dbReference type="PDB" id="7WFG">
    <property type="method" value="EM"/>
    <property type="resolution" value="4.33 A"/>
    <property type="chains" value="H=1-393"/>
</dbReference>
<dbReference type="PDB" id="7WG5">
    <property type="method" value="EM"/>
    <property type="resolution" value="3.89 A"/>
    <property type="chains" value="H=1-393"/>
</dbReference>
<dbReference type="PDBsum" id="7WFG"/>
<dbReference type="PDBsum" id="7WG5"/>
<dbReference type="EMDB" id="EMD-32465"/>
<dbReference type="EMDB" id="EMD-32477"/>
<dbReference type="SMR" id="P56753"/>
<dbReference type="BioGRID" id="29993">
    <property type="interactions" value="4"/>
</dbReference>
<dbReference type="FunCoup" id="P56753">
    <property type="interactions" value="11"/>
</dbReference>
<dbReference type="STRING" id="3702.P56753"/>
<dbReference type="TCDB" id="3.D.1.8.1">
    <property type="family name" value="the h+ or na+-translocating nadh dehydrogenase (ndh) family"/>
</dbReference>
<dbReference type="iPTMnet" id="P56753"/>
<dbReference type="PaxDb" id="3702-ATCG01110.1"/>
<dbReference type="ProteomicsDB" id="251142"/>
<dbReference type="EnsemblPlants" id="ATCG01110.1">
    <property type="protein sequence ID" value="ATCG01110.1"/>
    <property type="gene ID" value="ATCG01110"/>
</dbReference>
<dbReference type="GeneID" id="844805"/>
<dbReference type="Gramene" id="ATCG01110.1">
    <property type="protein sequence ID" value="ATCG01110.1"/>
    <property type="gene ID" value="ATCG01110"/>
</dbReference>
<dbReference type="KEGG" id="ath:ArthCp080"/>
<dbReference type="Araport" id="ATCG01110"/>
<dbReference type="TAIR" id="ATCG01110">
    <property type="gene designation" value="NDHH"/>
</dbReference>
<dbReference type="eggNOG" id="KOG2870">
    <property type="taxonomic scope" value="Eukaryota"/>
</dbReference>
<dbReference type="HOGENOM" id="CLU_015134_1_2_1"/>
<dbReference type="InParanoid" id="P56753"/>
<dbReference type="OMA" id="TRMDYLT"/>
<dbReference type="BioCyc" id="ARA:ATCG01110-MONOMER"/>
<dbReference type="PRO" id="PR:P56753"/>
<dbReference type="Proteomes" id="UP000006548">
    <property type="component" value="Chloroplast Pltd"/>
</dbReference>
<dbReference type="ExpressionAtlas" id="P56753">
    <property type="expression patterns" value="baseline and differential"/>
</dbReference>
<dbReference type="GO" id="GO:0009507">
    <property type="term" value="C:chloroplast"/>
    <property type="evidence" value="ECO:0007005"/>
    <property type="project" value="TAIR"/>
</dbReference>
<dbReference type="GO" id="GO:0009570">
    <property type="term" value="C:chloroplast stroma"/>
    <property type="evidence" value="ECO:0007005"/>
    <property type="project" value="TAIR"/>
</dbReference>
<dbReference type="GO" id="GO:0009534">
    <property type="term" value="C:chloroplast thylakoid"/>
    <property type="evidence" value="ECO:0007005"/>
    <property type="project" value="TAIR"/>
</dbReference>
<dbReference type="GO" id="GO:0009535">
    <property type="term" value="C:chloroplast thylakoid membrane"/>
    <property type="evidence" value="ECO:0007005"/>
    <property type="project" value="TAIR"/>
</dbReference>
<dbReference type="GO" id="GO:0051287">
    <property type="term" value="F:NAD binding"/>
    <property type="evidence" value="ECO:0007669"/>
    <property type="project" value="InterPro"/>
</dbReference>
<dbReference type="GO" id="GO:0003959">
    <property type="term" value="F:NADPH dehydrogenase activity"/>
    <property type="evidence" value="ECO:0000304"/>
    <property type="project" value="TAIR"/>
</dbReference>
<dbReference type="GO" id="GO:0016655">
    <property type="term" value="F:oxidoreductase activity, acting on NAD(P)H, quinone or similar compound as acceptor"/>
    <property type="evidence" value="ECO:0007669"/>
    <property type="project" value="UniProtKB-UniRule"/>
</dbReference>
<dbReference type="GO" id="GO:0048038">
    <property type="term" value="F:quinone binding"/>
    <property type="evidence" value="ECO:0007669"/>
    <property type="project" value="UniProtKB-KW"/>
</dbReference>
<dbReference type="GO" id="GO:0019684">
    <property type="term" value="P:photosynthesis, light reaction"/>
    <property type="evidence" value="ECO:0007669"/>
    <property type="project" value="UniProtKB-UniRule"/>
</dbReference>
<dbReference type="FunFam" id="1.10.645.10:FF:000003">
    <property type="entry name" value="NAD(P)H-quinone oxidoreductase subunit H, chloroplastic"/>
    <property type="match status" value="1"/>
</dbReference>
<dbReference type="Gene3D" id="1.10.645.10">
    <property type="entry name" value="Cytochrome-c3 Hydrogenase, chain B"/>
    <property type="match status" value="1"/>
</dbReference>
<dbReference type="HAMAP" id="MF_01358">
    <property type="entry name" value="NDH1_NuoD"/>
    <property type="match status" value="1"/>
</dbReference>
<dbReference type="InterPro" id="IPR001135">
    <property type="entry name" value="NADH_Q_OxRdtase_suD"/>
</dbReference>
<dbReference type="InterPro" id="IPR014029">
    <property type="entry name" value="NADH_UbQ_OxRdtase_49kDa_CS"/>
</dbReference>
<dbReference type="InterPro" id="IPR022885">
    <property type="entry name" value="NDH1_su_D/H"/>
</dbReference>
<dbReference type="InterPro" id="IPR029014">
    <property type="entry name" value="NiFe-Hase_large"/>
</dbReference>
<dbReference type="NCBIfam" id="NF004739">
    <property type="entry name" value="PRK06075.1"/>
    <property type="match status" value="1"/>
</dbReference>
<dbReference type="NCBIfam" id="NF005649">
    <property type="entry name" value="PRK07415.1"/>
    <property type="match status" value="1"/>
</dbReference>
<dbReference type="PANTHER" id="PTHR11993:SF10">
    <property type="entry name" value="NADH DEHYDROGENASE [UBIQUINONE] IRON-SULFUR PROTEIN 2, MITOCHONDRIAL"/>
    <property type="match status" value="1"/>
</dbReference>
<dbReference type="PANTHER" id="PTHR11993">
    <property type="entry name" value="NADH-UBIQUINONE OXIDOREDUCTASE 49 KDA SUBUNIT"/>
    <property type="match status" value="1"/>
</dbReference>
<dbReference type="Pfam" id="PF00346">
    <property type="entry name" value="Complex1_49kDa"/>
    <property type="match status" value="1"/>
</dbReference>
<dbReference type="SUPFAM" id="SSF56762">
    <property type="entry name" value="HydB/Nqo4-like"/>
    <property type="match status" value="1"/>
</dbReference>
<dbReference type="PROSITE" id="PS00535">
    <property type="entry name" value="COMPLEX1_49K"/>
    <property type="match status" value="1"/>
</dbReference>
<accession>P56753</accession>
<comment type="function">
    <text evidence="1">NDH shuttles electrons from NAD(P)H:plastoquinone, via FMN and iron-sulfur (Fe-S) centers, to quinones in the photosynthetic chain and possibly in a chloroplast respiratory chain. The immediate electron acceptor for the enzyme in this species is believed to be plastoquinone. Couples the redox reaction to proton translocation, and thus conserves the redox energy in a proton gradient.</text>
</comment>
<comment type="catalytic activity">
    <reaction evidence="1">
        <text>a plastoquinone + NADH + (n+1) H(+)(in) = a plastoquinol + NAD(+) + n H(+)(out)</text>
        <dbReference type="Rhea" id="RHEA:42608"/>
        <dbReference type="Rhea" id="RHEA-COMP:9561"/>
        <dbReference type="Rhea" id="RHEA-COMP:9562"/>
        <dbReference type="ChEBI" id="CHEBI:15378"/>
        <dbReference type="ChEBI" id="CHEBI:17757"/>
        <dbReference type="ChEBI" id="CHEBI:57540"/>
        <dbReference type="ChEBI" id="CHEBI:57945"/>
        <dbReference type="ChEBI" id="CHEBI:62192"/>
    </reaction>
</comment>
<comment type="catalytic activity">
    <reaction evidence="1">
        <text>a plastoquinone + NADPH + (n+1) H(+)(in) = a plastoquinol + NADP(+) + n H(+)(out)</text>
        <dbReference type="Rhea" id="RHEA:42612"/>
        <dbReference type="Rhea" id="RHEA-COMP:9561"/>
        <dbReference type="Rhea" id="RHEA-COMP:9562"/>
        <dbReference type="ChEBI" id="CHEBI:15378"/>
        <dbReference type="ChEBI" id="CHEBI:17757"/>
        <dbReference type="ChEBI" id="CHEBI:57783"/>
        <dbReference type="ChEBI" id="CHEBI:58349"/>
        <dbReference type="ChEBI" id="CHEBI:62192"/>
    </reaction>
</comment>
<comment type="subunit">
    <text evidence="1 2">NDH is composed of at least 16 different subunits, 5 of which are encoded in the nucleus (By similarity). Interacts with the chaperonin CNP60B4 subunit.</text>
</comment>
<comment type="subcellular location">
    <subcellularLocation>
        <location evidence="1">Plastid</location>
        <location evidence="1">Chloroplast thylakoid membrane</location>
        <topology evidence="1">Peripheral membrane protein</topology>
        <orientation evidence="1">Stromal side</orientation>
    </subcellularLocation>
</comment>
<comment type="miscellaneous">
    <text evidence="3">Folded specifically by a chaperonin Cpn60 complex containing at least 1 Cpn60 beta 4 subunit.</text>
</comment>
<comment type="similarity">
    <text evidence="1">Belongs to the complex I 49 kDa subunit family.</text>
</comment>
<sequence length="393" mass="45503">MKRPVTGKDLMIVNMGPHHPSMHGVLRLIVTLDGEDVVDCEPILGYLHRGMEKIAENRAIIQYLPYVTRWDYLATMFTEAITVNGPEQLGNIQVPKRASYIRVIMLELSRIASHLLWLGPFMADIGAQTPFFYIFREREFVYDLFEAATGMRMMHNFFRIGGIAADLPYGWIDKCLDFCDYFLTEVVEYQKLITRNPIFLERVEGVGIIGGEEAINWGLSGPMLRASGIPWDLRKIDRYESYDEFEWEIQWQKQGDSLARYLVRLSEMTESIKIIQQALEGLPGGPYENLESRGFDRKRNPEWNDFEYRFISKKPSPTFELSKQELYVRVEAPKGELGIFLIGDQSGFPWRWKIRPPGFINLQILPELVKRMKLADIMTILGSIDIIMGEVDR</sequence>